<dbReference type="EMBL" id="AF317474">
    <property type="protein sequence ID" value="AAL26902.1"/>
    <property type="molecule type" value="Genomic_DNA"/>
</dbReference>
<dbReference type="EMBL" id="AL591688">
    <property type="protein sequence ID" value="CAC45960.1"/>
    <property type="molecule type" value="Genomic_DNA"/>
</dbReference>
<dbReference type="RefSeq" id="NP_385487.1">
    <property type="nucleotide sequence ID" value="NC_003047.1"/>
</dbReference>
<dbReference type="RefSeq" id="WP_003536492.1">
    <property type="nucleotide sequence ID" value="NC_003047.1"/>
</dbReference>
<dbReference type="SMR" id="Q926A5"/>
<dbReference type="EnsemblBacteria" id="CAC45960">
    <property type="protein sequence ID" value="CAC45960"/>
    <property type="gene ID" value="SMc01283"/>
</dbReference>
<dbReference type="GeneID" id="89575705"/>
<dbReference type="KEGG" id="sme:SMc01283"/>
<dbReference type="PATRIC" id="fig|266834.11.peg.2798"/>
<dbReference type="eggNOG" id="COG0203">
    <property type="taxonomic scope" value="Bacteria"/>
</dbReference>
<dbReference type="HOGENOM" id="CLU_074407_2_0_5"/>
<dbReference type="OrthoDB" id="9809073at2"/>
<dbReference type="Proteomes" id="UP000001976">
    <property type="component" value="Chromosome"/>
</dbReference>
<dbReference type="GO" id="GO:0022625">
    <property type="term" value="C:cytosolic large ribosomal subunit"/>
    <property type="evidence" value="ECO:0007669"/>
    <property type="project" value="TreeGrafter"/>
</dbReference>
<dbReference type="GO" id="GO:0003735">
    <property type="term" value="F:structural constituent of ribosome"/>
    <property type="evidence" value="ECO:0007669"/>
    <property type="project" value="InterPro"/>
</dbReference>
<dbReference type="GO" id="GO:0006412">
    <property type="term" value="P:translation"/>
    <property type="evidence" value="ECO:0007669"/>
    <property type="project" value="UniProtKB-UniRule"/>
</dbReference>
<dbReference type="FunFam" id="3.90.1030.10:FF:000001">
    <property type="entry name" value="50S ribosomal protein L17"/>
    <property type="match status" value="1"/>
</dbReference>
<dbReference type="Gene3D" id="3.90.1030.10">
    <property type="entry name" value="Ribosomal protein L17"/>
    <property type="match status" value="1"/>
</dbReference>
<dbReference type="HAMAP" id="MF_01368">
    <property type="entry name" value="Ribosomal_bL17"/>
    <property type="match status" value="1"/>
</dbReference>
<dbReference type="InterPro" id="IPR000456">
    <property type="entry name" value="Ribosomal_bL17"/>
</dbReference>
<dbReference type="InterPro" id="IPR047859">
    <property type="entry name" value="Ribosomal_bL17_CS"/>
</dbReference>
<dbReference type="InterPro" id="IPR036373">
    <property type="entry name" value="Ribosomal_bL17_sf"/>
</dbReference>
<dbReference type="NCBIfam" id="TIGR00059">
    <property type="entry name" value="L17"/>
    <property type="match status" value="1"/>
</dbReference>
<dbReference type="PANTHER" id="PTHR14413:SF16">
    <property type="entry name" value="LARGE RIBOSOMAL SUBUNIT PROTEIN BL17M"/>
    <property type="match status" value="1"/>
</dbReference>
<dbReference type="PANTHER" id="PTHR14413">
    <property type="entry name" value="RIBOSOMAL PROTEIN L17"/>
    <property type="match status" value="1"/>
</dbReference>
<dbReference type="Pfam" id="PF01196">
    <property type="entry name" value="Ribosomal_L17"/>
    <property type="match status" value="1"/>
</dbReference>
<dbReference type="SUPFAM" id="SSF64263">
    <property type="entry name" value="Prokaryotic ribosomal protein L17"/>
    <property type="match status" value="1"/>
</dbReference>
<dbReference type="PROSITE" id="PS01167">
    <property type="entry name" value="RIBOSOMAL_L17"/>
    <property type="match status" value="1"/>
</dbReference>
<name>RL17_RHIME</name>
<protein>
    <recommendedName>
        <fullName evidence="1">Large ribosomal subunit protein bL17</fullName>
    </recommendedName>
    <alternativeName>
        <fullName evidence="2">50S ribosomal protein L17</fullName>
    </alternativeName>
</protein>
<gene>
    <name evidence="1" type="primary">rplQ</name>
    <name type="ordered locus">R01381</name>
    <name type="ORF">SMc01283</name>
</gene>
<keyword id="KW-1185">Reference proteome</keyword>
<keyword id="KW-0687">Ribonucleoprotein</keyword>
<keyword id="KW-0689">Ribosomal protein</keyword>
<evidence type="ECO:0000255" key="1">
    <source>
        <dbReference type="HAMAP-Rule" id="MF_01368"/>
    </source>
</evidence>
<evidence type="ECO:0000305" key="2"/>
<accession>Q926A5</accession>
<sequence length="141" mass="15492">MRHGKAGRKLNRTASHRKAMFANMAASLIEHEQIVTTLPKAKEIRPIVEKLVTLGKRGDLHARRQAISQIRDVAVVSKLFDAIASRYATRNGGYLRIMKAGFRQGDNAPLAVIEFVDRDVDAKGSKDRARVSAEAEAAEAA</sequence>
<reference key="1">
    <citation type="submission" date="2000-10" db="EMBL/GenBank/DDBJ databases">
        <title>Isolation and characterization of RpoA from Rhizobium meliloti.</title>
        <authorList>
            <person name="Peck M.C."/>
            <person name="Fisher R.F."/>
            <person name="Long S.R."/>
        </authorList>
    </citation>
    <scope>NUCLEOTIDE SEQUENCE [GENOMIC DNA]</scope>
    <source>
        <strain>1021</strain>
    </source>
</reference>
<reference key="2">
    <citation type="journal article" date="2001" name="Proc. Natl. Acad. Sci. U.S.A.">
        <title>Analysis of the chromosome sequence of the legume symbiont Sinorhizobium meliloti strain 1021.</title>
        <authorList>
            <person name="Capela D."/>
            <person name="Barloy-Hubler F."/>
            <person name="Gouzy J."/>
            <person name="Bothe G."/>
            <person name="Ampe F."/>
            <person name="Batut J."/>
            <person name="Boistard P."/>
            <person name="Becker A."/>
            <person name="Boutry M."/>
            <person name="Cadieu E."/>
            <person name="Dreano S."/>
            <person name="Gloux S."/>
            <person name="Godrie T."/>
            <person name="Goffeau A."/>
            <person name="Kahn D."/>
            <person name="Kiss E."/>
            <person name="Lelaure V."/>
            <person name="Masuy D."/>
            <person name="Pohl T."/>
            <person name="Portetelle D."/>
            <person name="Puehler A."/>
            <person name="Purnelle B."/>
            <person name="Ramsperger U."/>
            <person name="Renard C."/>
            <person name="Thebault P."/>
            <person name="Vandenbol M."/>
            <person name="Weidner S."/>
            <person name="Galibert F."/>
        </authorList>
    </citation>
    <scope>NUCLEOTIDE SEQUENCE [LARGE SCALE GENOMIC DNA]</scope>
    <source>
        <strain>1021</strain>
    </source>
</reference>
<reference key="3">
    <citation type="journal article" date="2001" name="Science">
        <title>The composite genome of the legume symbiont Sinorhizobium meliloti.</title>
        <authorList>
            <person name="Galibert F."/>
            <person name="Finan T.M."/>
            <person name="Long S.R."/>
            <person name="Puehler A."/>
            <person name="Abola P."/>
            <person name="Ampe F."/>
            <person name="Barloy-Hubler F."/>
            <person name="Barnett M.J."/>
            <person name="Becker A."/>
            <person name="Boistard P."/>
            <person name="Bothe G."/>
            <person name="Boutry M."/>
            <person name="Bowser L."/>
            <person name="Buhrmester J."/>
            <person name="Cadieu E."/>
            <person name="Capela D."/>
            <person name="Chain P."/>
            <person name="Cowie A."/>
            <person name="Davis R.W."/>
            <person name="Dreano S."/>
            <person name="Federspiel N.A."/>
            <person name="Fisher R.F."/>
            <person name="Gloux S."/>
            <person name="Godrie T."/>
            <person name="Goffeau A."/>
            <person name="Golding B."/>
            <person name="Gouzy J."/>
            <person name="Gurjal M."/>
            <person name="Hernandez-Lucas I."/>
            <person name="Hong A."/>
            <person name="Huizar L."/>
            <person name="Hyman R.W."/>
            <person name="Jones T."/>
            <person name="Kahn D."/>
            <person name="Kahn M.L."/>
            <person name="Kalman S."/>
            <person name="Keating D.H."/>
            <person name="Kiss E."/>
            <person name="Komp C."/>
            <person name="Lelaure V."/>
            <person name="Masuy D."/>
            <person name="Palm C."/>
            <person name="Peck M.C."/>
            <person name="Pohl T.M."/>
            <person name="Portetelle D."/>
            <person name="Purnelle B."/>
            <person name="Ramsperger U."/>
            <person name="Surzycki R."/>
            <person name="Thebault P."/>
            <person name="Vandenbol M."/>
            <person name="Vorhoelter F.J."/>
            <person name="Weidner S."/>
            <person name="Wells D.H."/>
            <person name="Wong K."/>
            <person name="Yeh K.-C."/>
            <person name="Batut J."/>
        </authorList>
    </citation>
    <scope>NUCLEOTIDE SEQUENCE [LARGE SCALE GENOMIC DNA]</scope>
    <source>
        <strain>1021</strain>
    </source>
</reference>
<comment type="subunit">
    <text evidence="1">Part of the 50S ribosomal subunit. Contacts protein L32.</text>
</comment>
<comment type="similarity">
    <text evidence="1">Belongs to the bacterial ribosomal protein bL17 family.</text>
</comment>
<feature type="chain" id="PRO_0000175539" description="Large ribosomal subunit protein bL17">
    <location>
        <begin position="1"/>
        <end position="141"/>
    </location>
</feature>
<organism>
    <name type="scientific">Rhizobium meliloti (strain 1021)</name>
    <name type="common">Ensifer meliloti</name>
    <name type="synonym">Sinorhizobium meliloti</name>
    <dbReference type="NCBI Taxonomy" id="266834"/>
    <lineage>
        <taxon>Bacteria</taxon>
        <taxon>Pseudomonadati</taxon>
        <taxon>Pseudomonadota</taxon>
        <taxon>Alphaproteobacteria</taxon>
        <taxon>Hyphomicrobiales</taxon>
        <taxon>Rhizobiaceae</taxon>
        <taxon>Sinorhizobium/Ensifer group</taxon>
        <taxon>Sinorhizobium</taxon>
    </lineage>
</organism>
<proteinExistence type="inferred from homology"/>